<comment type="function">
    <text evidence="1">May play a key role in the regulation of the intracellular concentration of adenosylhomocysteine.</text>
</comment>
<comment type="catalytic activity">
    <reaction evidence="1">
        <text>S-adenosyl-L-homocysteine + H2O = L-homocysteine + adenosine</text>
        <dbReference type="Rhea" id="RHEA:21708"/>
        <dbReference type="ChEBI" id="CHEBI:15377"/>
        <dbReference type="ChEBI" id="CHEBI:16335"/>
        <dbReference type="ChEBI" id="CHEBI:57856"/>
        <dbReference type="ChEBI" id="CHEBI:58199"/>
        <dbReference type="EC" id="3.13.2.1"/>
    </reaction>
</comment>
<comment type="cofactor">
    <cofactor evidence="1">
        <name>NAD(+)</name>
        <dbReference type="ChEBI" id="CHEBI:57540"/>
    </cofactor>
    <text evidence="1">Binds 1 NAD(+) per subunit.</text>
</comment>
<comment type="pathway">
    <text evidence="1">Amino-acid biosynthesis; L-homocysteine biosynthesis; L-homocysteine from S-adenosyl-L-homocysteine: step 1/1.</text>
</comment>
<comment type="subcellular location">
    <subcellularLocation>
        <location evidence="1">Cytoplasm</location>
    </subcellularLocation>
</comment>
<comment type="similarity">
    <text evidence="1">Belongs to the adenosylhomocysteinase family.</text>
</comment>
<dbReference type="EC" id="3.13.2.1" evidence="1"/>
<dbReference type="EMBL" id="AE015928">
    <property type="protein sequence ID" value="AAO77903.1"/>
    <property type="molecule type" value="Genomic_DNA"/>
</dbReference>
<dbReference type="RefSeq" id="NP_811709.1">
    <property type="nucleotide sequence ID" value="NC_004663.1"/>
</dbReference>
<dbReference type="SMR" id="Q8A407"/>
<dbReference type="STRING" id="226186.BT_2797"/>
<dbReference type="PaxDb" id="226186-BT_2797"/>
<dbReference type="EnsemblBacteria" id="AAO77903">
    <property type="protein sequence ID" value="AAO77903"/>
    <property type="gene ID" value="BT_2797"/>
</dbReference>
<dbReference type="KEGG" id="bth:BT_2797"/>
<dbReference type="PATRIC" id="fig|226186.12.peg.2844"/>
<dbReference type="eggNOG" id="COG0499">
    <property type="taxonomic scope" value="Bacteria"/>
</dbReference>
<dbReference type="HOGENOM" id="CLU_025194_2_1_10"/>
<dbReference type="InParanoid" id="Q8A407"/>
<dbReference type="OrthoDB" id="9802717at2"/>
<dbReference type="UniPathway" id="UPA00314">
    <property type="reaction ID" value="UER00076"/>
</dbReference>
<dbReference type="Proteomes" id="UP000001414">
    <property type="component" value="Chromosome"/>
</dbReference>
<dbReference type="GO" id="GO:0005829">
    <property type="term" value="C:cytosol"/>
    <property type="evidence" value="ECO:0000318"/>
    <property type="project" value="GO_Central"/>
</dbReference>
<dbReference type="GO" id="GO:0004013">
    <property type="term" value="F:adenosylhomocysteinase activity"/>
    <property type="evidence" value="ECO:0000318"/>
    <property type="project" value="GO_Central"/>
</dbReference>
<dbReference type="GO" id="GO:0071269">
    <property type="term" value="P:L-homocysteine biosynthetic process"/>
    <property type="evidence" value="ECO:0007669"/>
    <property type="project" value="UniProtKB-UniRule"/>
</dbReference>
<dbReference type="GO" id="GO:0006730">
    <property type="term" value="P:one-carbon metabolic process"/>
    <property type="evidence" value="ECO:0007669"/>
    <property type="project" value="UniProtKB-KW"/>
</dbReference>
<dbReference type="GO" id="GO:0033353">
    <property type="term" value="P:S-adenosylmethionine cycle"/>
    <property type="evidence" value="ECO:0000318"/>
    <property type="project" value="GO_Central"/>
</dbReference>
<dbReference type="CDD" id="cd00401">
    <property type="entry name" value="SAHH"/>
    <property type="match status" value="1"/>
</dbReference>
<dbReference type="FunFam" id="3.40.50.720:FF:000004">
    <property type="entry name" value="Adenosylhomocysteinase"/>
    <property type="match status" value="1"/>
</dbReference>
<dbReference type="Gene3D" id="3.40.50.1480">
    <property type="entry name" value="Adenosylhomocysteinase-like"/>
    <property type="match status" value="1"/>
</dbReference>
<dbReference type="Gene3D" id="3.40.50.720">
    <property type="entry name" value="NAD(P)-binding Rossmann-like Domain"/>
    <property type="match status" value="1"/>
</dbReference>
<dbReference type="HAMAP" id="MF_00563">
    <property type="entry name" value="AdoHcyase"/>
    <property type="match status" value="1"/>
</dbReference>
<dbReference type="InterPro" id="IPR042172">
    <property type="entry name" value="Adenosylhomocyst_ase-like_sf"/>
</dbReference>
<dbReference type="InterPro" id="IPR000043">
    <property type="entry name" value="Adenosylhomocysteinase-like"/>
</dbReference>
<dbReference type="InterPro" id="IPR015878">
    <property type="entry name" value="Ado_hCys_hydrolase_NAD-bd"/>
</dbReference>
<dbReference type="InterPro" id="IPR036291">
    <property type="entry name" value="NAD(P)-bd_dom_sf"/>
</dbReference>
<dbReference type="InterPro" id="IPR020082">
    <property type="entry name" value="S-Ado-L-homoCys_hydrolase_CS"/>
</dbReference>
<dbReference type="NCBIfam" id="TIGR00936">
    <property type="entry name" value="ahcY"/>
    <property type="match status" value="1"/>
</dbReference>
<dbReference type="NCBIfam" id="NF004005">
    <property type="entry name" value="PRK05476.2-3"/>
    <property type="match status" value="1"/>
</dbReference>
<dbReference type="PANTHER" id="PTHR23420">
    <property type="entry name" value="ADENOSYLHOMOCYSTEINASE"/>
    <property type="match status" value="1"/>
</dbReference>
<dbReference type="PANTHER" id="PTHR23420:SF0">
    <property type="entry name" value="ADENOSYLHOMOCYSTEINASE"/>
    <property type="match status" value="1"/>
</dbReference>
<dbReference type="Pfam" id="PF05221">
    <property type="entry name" value="AdoHcyase"/>
    <property type="match status" value="1"/>
</dbReference>
<dbReference type="Pfam" id="PF00670">
    <property type="entry name" value="AdoHcyase_NAD"/>
    <property type="match status" value="1"/>
</dbReference>
<dbReference type="PIRSF" id="PIRSF001109">
    <property type="entry name" value="Ad_hcy_hydrolase"/>
    <property type="match status" value="1"/>
</dbReference>
<dbReference type="SMART" id="SM00996">
    <property type="entry name" value="AdoHcyase"/>
    <property type="match status" value="1"/>
</dbReference>
<dbReference type="SMART" id="SM00997">
    <property type="entry name" value="AdoHcyase_NAD"/>
    <property type="match status" value="1"/>
</dbReference>
<dbReference type="SUPFAM" id="SSF52283">
    <property type="entry name" value="Formate/glycerate dehydrogenase catalytic domain-like"/>
    <property type="match status" value="1"/>
</dbReference>
<dbReference type="SUPFAM" id="SSF51735">
    <property type="entry name" value="NAD(P)-binding Rossmann-fold domains"/>
    <property type="match status" value="1"/>
</dbReference>
<dbReference type="PROSITE" id="PS00738">
    <property type="entry name" value="ADOHCYASE_1"/>
    <property type="match status" value="1"/>
</dbReference>
<dbReference type="PROSITE" id="PS00739">
    <property type="entry name" value="ADOHCYASE_2"/>
    <property type="match status" value="1"/>
</dbReference>
<reference key="1">
    <citation type="journal article" date="2003" name="Science">
        <title>A genomic view of the human-Bacteroides thetaiotaomicron symbiosis.</title>
        <authorList>
            <person name="Xu J."/>
            <person name="Bjursell M.K."/>
            <person name="Himrod J."/>
            <person name="Deng S."/>
            <person name="Carmichael L.K."/>
            <person name="Chiang H.C."/>
            <person name="Hooper L.V."/>
            <person name="Gordon J.I."/>
        </authorList>
    </citation>
    <scope>NUCLEOTIDE SEQUENCE [LARGE SCALE GENOMIC DNA]</scope>
    <source>
        <strain>ATCC 29148 / DSM 2079 / JCM 5827 / CCUG 10774 / NCTC 10582 / VPI-5482 / E50</strain>
    </source>
</reference>
<keyword id="KW-0963">Cytoplasm</keyword>
<keyword id="KW-0378">Hydrolase</keyword>
<keyword id="KW-0520">NAD</keyword>
<keyword id="KW-0554">One-carbon metabolism</keyword>
<keyword id="KW-1185">Reference proteome</keyword>
<organism>
    <name type="scientific">Bacteroides thetaiotaomicron (strain ATCC 29148 / DSM 2079 / JCM 5827 / CCUG 10774 / NCTC 10582 / VPI-5482 / E50)</name>
    <dbReference type="NCBI Taxonomy" id="226186"/>
    <lineage>
        <taxon>Bacteria</taxon>
        <taxon>Pseudomonadati</taxon>
        <taxon>Bacteroidota</taxon>
        <taxon>Bacteroidia</taxon>
        <taxon>Bacteroidales</taxon>
        <taxon>Bacteroidaceae</taxon>
        <taxon>Bacteroides</taxon>
    </lineage>
</organism>
<accession>Q8A407</accession>
<name>SAHH_BACTN</name>
<sequence length="476" mass="52739">MIYNMSTELFSTLPYKVADITLADFGRKEIDLAEKEMPGLMALREKYGESKPLKGARIMGSLHMTIQTAVLIETLVALGAEVRWCSCNIYSTQDHAAAAIAASGVAVFAWKGENLADYWWCTLQALNFPGGKGPNVIVDDGGDATMMIHVGYDAENDAAVLDKEVHAEDEIELNAILKKVLAEDKTRWHRVAEEMRGVSEETTTGVHRLYQMQEEGKLLFPAFNVNDSVTKSKFDNLYGCRESLADGIKRATDVMIAGKVVVVCGYGDVGKGCSHSMRSYGARVLVTEVDPICALQAAMEGFEVVTMEDACTEGNIFVTTTGNIDIIRIDHMEKMKDQAIVCNIGHFDNEIQVDALKHYSGIKCVNIKPQVDRYYFPDGHSILLLADGRLVNLGCATGHPSFVMSNSFTNQTLAQIELFNKKYEVNVYRLPKHLDEEVARLHLEKIGVKLTKLTPEQAAYIGVSVDGPYKAEHYRY</sequence>
<proteinExistence type="inferred from homology"/>
<evidence type="ECO:0000255" key="1">
    <source>
        <dbReference type="HAMAP-Rule" id="MF_00563"/>
    </source>
</evidence>
<feature type="chain" id="PRO_0000116943" description="Adenosylhomocysteinase">
    <location>
        <begin position="1"/>
        <end position="476"/>
    </location>
</feature>
<feature type="binding site" evidence="1">
    <location>
        <position position="65"/>
    </location>
    <ligand>
        <name>substrate</name>
    </ligand>
</feature>
<feature type="binding site" evidence="1">
    <location>
        <position position="140"/>
    </location>
    <ligand>
        <name>substrate</name>
    </ligand>
</feature>
<feature type="binding site" evidence="1">
    <location>
        <position position="201"/>
    </location>
    <ligand>
        <name>substrate</name>
    </ligand>
</feature>
<feature type="binding site" evidence="1">
    <location>
        <begin position="202"/>
        <end position="204"/>
    </location>
    <ligand>
        <name>NAD(+)</name>
        <dbReference type="ChEBI" id="CHEBI:57540"/>
    </ligand>
</feature>
<feature type="binding site" evidence="1">
    <location>
        <position position="231"/>
    </location>
    <ligand>
        <name>substrate</name>
    </ligand>
</feature>
<feature type="binding site" evidence="1">
    <location>
        <position position="235"/>
    </location>
    <ligand>
        <name>substrate</name>
    </ligand>
</feature>
<feature type="binding site" evidence="1">
    <location>
        <position position="236"/>
    </location>
    <ligand>
        <name>NAD(+)</name>
        <dbReference type="ChEBI" id="CHEBI:57540"/>
    </ligand>
</feature>
<feature type="binding site" evidence="1">
    <location>
        <begin position="265"/>
        <end position="270"/>
    </location>
    <ligand>
        <name>NAD(+)</name>
        <dbReference type="ChEBI" id="CHEBI:57540"/>
    </ligand>
</feature>
<feature type="binding site" evidence="1">
    <location>
        <position position="288"/>
    </location>
    <ligand>
        <name>NAD(+)</name>
        <dbReference type="ChEBI" id="CHEBI:57540"/>
    </ligand>
</feature>
<feature type="binding site" evidence="1">
    <location>
        <position position="323"/>
    </location>
    <ligand>
        <name>NAD(+)</name>
        <dbReference type="ChEBI" id="CHEBI:57540"/>
    </ligand>
</feature>
<feature type="binding site" evidence="1">
    <location>
        <begin position="344"/>
        <end position="346"/>
    </location>
    <ligand>
        <name>NAD(+)</name>
        <dbReference type="ChEBI" id="CHEBI:57540"/>
    </ligand>
</feature>
<feature type="binding site" evidence="1">
    <location>
        <position position="392"/>
    </location>
    <ligand>
        <name>NAD(+)</name>
        <dbReference type="ChEBI" id="CHEBI:57540"/>
    </ligand>
</feature>
<gene>
    <name evidence="1" type="primary">ahcY</name>
    <name type="ordered locus">BT_2797</name>
</gene>
<protein>
    <recommendedName>
        <fullName evidence="1">Adenosylhomocysteinase</fullName>
        <ecNumber evidence="1">3.13.2.1</ecNumber>
    </recommendedName>
    <alternativeName>
        <fullName evidence="1">S-adenosyl-L-homocysteine hydrolase</fullName>
        <shortName evidence="1">AdoHcyase</shortName>
    </alternativeName>
</protein>